<reference key="1">
    <citation type="journal article" date="2001" name="Nature">
        <title>Genome sequence of enterohaemorrhagic Escherichia coli O157:H7.</title>
        <authorList>
            <person name="Perna N.T."/>
            <person name="Plunkett G. III"/>
            <person name="Burland V."/>
            <person name="Mau B."/>
            <person name="Glasner J.D."/>
            <person name="Rose D.J."/>
            <person name="Mayhew G.F."/>
            <person name="Evans P.S."/>
            <person name="Gregor J."/>
            <person name="Kirkpatrick H.A."/>
            <person name="Posfai G."/>
            <person name="Hackett J."/>
            <person name="Klink S."/>
            <person name="Boutin A."/>
            <person name="Shao Y."/>
            <person name="Miller L."/>
            <person name="Grotbeck E.J."/>
            <person name="Davis N.W."/>
            <person name="Lim A."/>
            <person name="Dimalanta E.T."/>
            <person name="Potamousis K."/>
            <person name="Apodaca J."/>
            <person name="Anantharaman T.S."/>
            <person name="Lin J."/>
            <person name="Yen G."/>
            <person name="Schwartz D.C."/>
            <person name="Welch R.A."/>
            <person name="Blattner F.R."/>
        </authorList>
    </citation>
    <scope>NUCLEOTIDE SEQUENCE [LARGE SCALE GENOMIC DNA]</scope>
    <source>
        <strain>O157:H7 / EDL933 / ATCC 700927 / EHEC</strain>
    </source>
</reference>
<reference key="2">
    <citation type="journal article" date="2001" name="DNA Res.">
        <title>Complete genome sequence of enterohemorrhagic Escherichia coli O157:H7 and genomic comparison with a laboratory strain K-12.</title>
        <authorList>
            <person name="Hayashi T."/>
            <person name="Makino K."/>
            <person name="Ohnishi M."/>
            <person name="Kurokawa K."/>
            <person name="Ishii K."/>
            <person name="Yokoyama K."/>
            <person name="Han C.-G."/>
            <person name="Ohtsubo E."/>
            <person name="Nakayama K."/>
            <person name="Murata T."/>
            <person name="Tanaka M."/>
            <person name="Tobe T."/>
            <person name="Iida T."/>
            <person name="Takami H."/>
            <person name="Honda T."/>
            <person name="Sasakawa C."/>
            <person name="Ogasawara N."/>
            <person name="Yasunaga T."/>
            <person name="Kuhara S."/>
            <person name="Shiba T."/>
            <person name="Hattori M."/>
            <person name="Shinagawa H."/>
        </authorList>
    </citation>
    <scope>NUCLEOTIDE SEQUENCE [LARGE SCALE GENOMIC DNA]</scope>
    <source>
        <strain>O157:H7 / Sakai / RIMD 0509952 / EHEC</strain>
    </source>
</reference>
<comment type="function">
    <text evidence="1">Removes the N-terminal methionine from nascent proteins. The N-terminal methionine is often cleaved when the second residue in the primary sequence is small and uncharged (Met-Ala-, Cys, Gly, Pro, Ser, Thr, or Val). Requires deformylation of the N(alpha)-formylated initiator methionine before it can be hydrolyzed.</text>
</comment>
<comment type="catalytic activity">
    <reaction evidence="1">
        <text>Release of N-terminal amino acids, preferentially methionine, from peptides and arylamides.</text>
        <dbReference type="EC" id="3.4.11.18"/>
    </reaction>
</comment>
<comment type="cofactor">
    <cofactor evidence="1">
        <name>Co(2+)</name>
        <dbReference type="ChEBI" id="CHEBI:48828"/>
    </cofactor>
    <cofactor evidence="1">
        <name>Zn(2+)</name>
        <dbReference type="ChEBI" id="CHEBI:29105"/>
    </cofactor>
    <cofactor evidence="1">
        <name>Mn(2+)</name>
        <dbReference type="ChEBI" id="CHEBI:29035"/>
    </cofactor>
    <cofactor evidence="1">
        <name>Fe(2+)</name>
        <dbReference type="ChEBI" id="CHEBI:29033"/>
    </cofactor>
    <text evidence="1">Binds 2 divalent metal cations per subunit. Has a high-affinity and a low affinity metal-binding site. The true nature of the physiological cofactor is under debate. The enzyme is active with cobalt, zinc, manganese or divalent iron ions. Most likely, methionine aminopeptidases function as mononuclear Fe(2+)-metalloproteases under physiological conditions, and the catalytically relevant metal-binding site has been assigned to the histidine-containing high-affinity site.</text>
</comment>
<comment type="subunit">
    <text evidence="1">Monomer.</text>
</comment>
<comment type="similarity">
    <text evidence="1">Belongs to the peptidase M24A family. Methionine aminopeptidase type 1 subfamily.</text>
</comment>
<proteinExistence type="inferred from homology"/>
<evidence type="ECO:0000255" key="1">
    <source>
        <dbReference type="HAMAP-Rule" id="MF_01974"/>
    </source>
</evidence>
<protein>
    <recommendedName>
        <fullName evidence="1">Methionine aminopeptidase</fullName>
        <shortName evidence="1">MAP</shortName>
        <shortName evidence="1">MetAP</shortName>
        <ecNumber evidence="1">3.4.11.18</ecNumber>
    </recommendedName>
    <alternativeName>
        <fullName evidence="1">Peptidase M</fullName>
    </alternativeName>
</protein>
<sequence>MAISIKTPEDIEKMRVAGRLAAEVLEMIEPYVKPGVSTGELDRICNDYIVNEQHAVSACLGYHGYPKSVCISINEVVCHGIPDDAKLLKDGDIVNIDVTVIKDGFHGDTSKMFIVGKPTIMGERLCRITQESLYLALRMVKPGINLREIGAAIQKFVEAEGFSVVREYCGHGIGRGFHEEPQVLHYDSRETNVVLKPGMTFTIEPMVNAGKKEIRTMKDGWTVKTKDRSLSAQYEHTIVVTDNGCEILTLRKDDTIPAIISHDE</sequence>
<keyword id="KW-0031">Aminopeptidase</keyword>
<keyword id="KW-0378">Hydrolase</keyword>
<keyword id="KW-0479">Metal-binding</keyword>
<keyword id="KW-0645">Protease</keyword>
<keyword id="KW-1185">Reference proteome</keyword>
<dbReference type="EC" id="3.4.11.18" evidence="1"/>
<dbReference type="EMBL" id="AE005174">
    <property type="protein sequence ID" value="AAG54470.1"/>
    <property type="molecule type" value="Genomic_DNA"/>
</dbReference>
<dbReference type="EMBL" id="BA000007">
    <property type="protein sequence ID" value="BAB33593.1"/>
    <property type="molecule type" value="Genomic_DNA"/>
</dbReference>
<dbReference type="PIR" id="B85501">
    <property type="entry name" value="B85501"/>
</dbReference>
<dbReference type="PIR" id="B90650">
    <property type="entry name" value="B90650"/>
</dbReference>
<dbReference type="RefSeq" id="NP_308197.1">
    <property type="nucleotide sequence ID" value="NC_002695.1"/>
</dbReference>
<dbReference type="RefSeq" id="WP_001018194.1">
    <property type="nucleotide sequence ID" value="NZ_VOAI01000002.1"/>
</dbReference>
<dbReference type="SMR" id="P0AE20"/>
<dbReference type="STRING" id="155864.Z0178"/>
<dbReference type="MEROPS" id="M24.001"/>
<dbReference type="GeneID" id="913847"/>
<dbReference type="GeneID" id="93777257"/>
<dbReference type="KEGG" id="ece:Z0178"/>
<dbReference type="KEGG" id="ecs:ECs_0170"/>
<dbReference type="PATRIC" id="fig|386585.9.peg.271"/>
<dbReference type="eggNOG" id="COG0024">
    <property type="taxonomic scope" value="Bacteria"/>
</dbReference>
<dbReference type="HOGENOM" id="CLU_015857_0_0_6"/>
<dbReference type="OMA" id="FYGDHAY"/>
<dbReference type="SABIO-RK" id="P0AE20"/>
<dbReference type="Proteomes" id="UP000000558">
    <property type="component" value="Chromosome"/>
</dbReference>
<dbReference type="Proteomes" id="UP000002519">
    <property type="component" value="Chromosome"/>
</dbReference>
<dbReference type="GO" id="GO:0005829">
    <property type="term" value="C:cytosol"/>
    <property type="evidence" value="ECO:0007669"/>
    <property type="project" value="TreeGrafter"/>
</dbReference>
<dbReference type="GO" id="GO:0004239">
    <property type="term" value="F:initiator methionyl aminopeptidase activity"/>
    <property type="evidence" value="ECO:0007669"/>
    <property type="project" value="UniProtKB-UniRule"/>
</dbReference>
<dbReference type="GO" id="GO:0046872">
    <property type="term" value="F:metal ion binding"/>
    <property type="evidence" value="ECO:0007669"/>
    <property type="project" value="UniProtKB-UniRule"/>
</dbReference>
<dbReference type="GO" id="GO:0070006">
    <property type="term" value="F:metalloaminopeptidase activity"/>
    <property type="evidence" value="ECO:0007669"/>
    <property type="project" value="UniProtKB-UniRule"/>
</dbReference>
<dbReference type="GO" id="GO:0006508">
    <property type="term" value="P:proteolysis"/>
    <property type="evidence" value="ECO:0007669"/>
    <property type="project" value="UniProtKB-KW"/>
</dbReference>
<dbReference type="CDD" id="cd01086">
    <property type="entry name" value="MetAP1"/>
    <property type="match status" value="1"/>
</dbReference>
<dbReference type="FunFam" id="3.90.230.10:FF:000001">
    <property type="entry name" value="Methionine aminopeptidase"/>
    <property type="match status" value="1"/>
</dbReference>
<dbReference type="Gene3D" id="3.90.230.10">
    <property type="entry name" value="Creatinase/methionine aminopeptidase superfamily"/>
    <property type="match status" value="1"/>
</dbReference>
<dbReference type="HAMAP" id="MF_01974">
    <property type="entry name" value="MetAP_1"/>
    <property type="match status" value="1"/>
</dbReference>
<dbReference type="InterPro" id="IPR036005">
    <property type="entry name" value="Creatinase/aminopeptidase-like"/>
</dbReference>
<dbReference type="InterPro" id="IPR000994">
    <property type="entry name" value="Pept_M24"/>
</dbReference>
<dbReference type="InterPro" id="IPR001714">
    <property type="entry name" value="Pept_M24_MAP"/>
</dbReference>
<dbReference type="InterPro" id="IPR002467">
    <property type="entry name" value="Pept_M24A_MAP1"/>
</dbReference>
<dbReference type="NCBIfam" id="TIGR00500">
    <property type="entry name" value="met_pdase_I"/>
    <property type="match status" value="1"/>
</dbReference>
<dbReference type="PANTHER" id="PTHR43330">
    <property type="entry name" value="METHIONINE AMINOPEPTIDASE"/>
    <property type="match status" value="1"/>
</dbReference>
<dbReference type="PANTHER" id="PTHR43330:SF27">
    <property type="entry name" value="METHIONINE AMINOPEPTIDASE"/>
    <property type="match status" value="1"/>
</dbReference>
<dbReference type="Pfam" id="PF00557">
    <property type="entry name" value="Peptidase_M24"/>
    <property type="match status" value="1"/>
</dbReference>
<dbReference type="PRINTS" id="PR00599">
    <property type="entry name" value="MAPEPTIDASE"/>
</dbReference>
<dbReference type="SUPFAM" id="SSF55920">
    <property type="entry name" value="Creatinase/aminopeptidase"/>
    <property type="match status" value="1"/>
</dbReference>
<dbReference type="PROSITE" id="PS00680">
    <property type="entry name" value="MAP_1"/>
    <property type="match status" value="1"/>
</dbReference>
<organism>
    <name type="scientific">Escherichia coli O157:H7</name>
    <dbReference type="NCBI Taxonomy" id="83334"/>
    <lineage>
        <taxon>Bacteria</taxon>
        <taxon>Pseudomonadati</taxon>
        <taxon>Pseudomonadota</taxon>
        <taxon>Gammaproteobacteria</taxon>
        <taxon>Enterobacterales</taxon>
        <taxon>Enterobacteriaceae</taxon>
        <taxon>Escherichia</taxon>
    </lineage>
</organism>
<gene>
    <name evidence="1" type="primary">map</name>
    <name type="ordered locus">Z0178</name>
    <name type="ordered locus">ECs0170</name>
</gene>
<name>MAP1_ECO57</name>
<accession>P0AE20</accession>
<accession>P07906</accession>
<feature type="chain" id="PRO_0000148938" description="Methionine aminopeptidase">
    <location>
        <begin position="1"/>
        <end position="264"/>
    </location>
</feature>
<feature type="binding site" evidence="1">
    <location>
        <position position="79"/>
    </location>
    <ligand>
        <name>substrate</name>
    </ligand>
</feature>
<feature type="binding site" evidence="1">
    <location>
        <position position="97"/>
    </location>
    <ligand>
        <name>a divalent metal cation</name>
        <dbReference type="ChEBI" id="CHEBI:60240"/>
        <label>1</label>
    </ligand>
</feature>
<feature type="binding site" evidence="1">
    <location>
        <position position="108"/>
    </location>
    <ligand>
        <name>a divalent metal cation</name>
        <dbReference type="ChEBI" id="CHEBI:60240"/>
        <label>1</label>
    </ligand>
</feature>
<feature type="binding site" evidence="1">
    <location>
        <position position="108"/>
    </location>
    <ligand>
        <name>a divalent metal cation</name>
        <dbReference type="ChEBI" id="CHEBI:60240"/>
        <label>2</label>
        <note>catalytic</note>
    </ligand>
</feature>
<feature type="binding site" evidence="1">
    <location>
        <position position="171"/>
    </location>
    <ligand>
        <name>a divalent metal cation</name>
        <dbReference type="ChEBI" id="CHEBI:60240"/>
        <label>2</label>
        <note>catalytic</note>
    </ligand>
</feature>
<feature type="binding site" evidence="1">
    <location>
        <position position="178"/>
    </location>
    <ligand>
        <name>substrate</name>
    </ligand>
</feature>
<feature type="binding site" evidence="1">
    <location>
        <position position="204"/>
    </location>
    <ligand>
        <name>a divalent metal cation</name>
        <dbReference type="ChEBI" id="CHEBI:60240"/>
        <label>2</label>
        <note>catalytic</note>
    </ligand>
</feature>
<feature type="binding site" evidence="1">
    <location>
        <position position="235"/>
    </location>
    <ligand>
        <name>a divalent metal cation</name>
        <dbReference type="ChEBI" id="CHEBI:60240"/>
        <label>1</label>
    </ligand>
</feature>
<feature type="binding site" evidence="1">
    <location>
        <position position="235"/>
    </location>
    <ligand>
        <name>a divalent metal cation</name>
        <dbReference type="ChEBI" id="CHEBI:60240"/>
        <label>2</label>
        <note>catalytic</note>
    </ligand>
</feature>